<reference key="1">
    <citation type="submission" date="2008-02" db="EMBL/GenBank/DDBJ databases">
        <title>Complete sequence of Synechococcus sp. PCC 7002.</title>
        <authorList>
            <person name="Li T."/>
            <person name="Zhao J."/>
            <person name="Zhao C."/>
            <person name="Liu Z."/>
            <person name="Zhao F."/>
            <person name="Marquardt J."/>
            <person name="Nomura C.T."/>
            <person name="Persson S."/>
            <person name="Detter J.C."/>
            <person name="Richardson P.M."/>
            <person name="Lanz C."/>
            <person name="Schuster S.C."/>
            <person name="Wang J."/>
            <person name="Li S."/>
            <person name="Huang X."/>
            <person name="Cai T."/>
            <person name="Yu Z."/>
            <person name="Luo J."/>
            <person name="Zhao J."/>
            <person name="Bryant D.A."/>
        </authorList>
    </citation>
    <scope>NUCLEOTIDE SEQUENCE [LARGE SCALE GENOMIC DNA]</scope>
    <source>
        <strain>ATCC 27264 / PCC 7002 / PR-6</strain>
    </source>
</reference>
<gene>
    <name evidence="1" type="primary">metK</name>
    <name type="ordered locus">SYNPCC7002_A1714</name>
</gene>
<accession>B1XPB0</accession>
<feature type="chain" id="PRO_1000093095" description="S-adenosylmethionine synthase">
    <location>
        <begin position="1"/>
        <end position="417"/>
    </location>
</feature>
<feature type="region of interest" description="Flexible loop" evidence="1">
    <location>
        <begin position="100"/>
        <end position="110"/>
    </location>
</feature>
<feature type="binding site" description="in other chain" evidence="1">
    <location>
        <position position="16"/>
    </location>
    <ligand>
        <name>ATP</name>
        <dbReference type="ChEBI" id="CHEBI:30616"/>
        <note>ligand shared between two neighboring subunits</note>
    </ligand>
</feature>
<feature type="binding site" evidence="1">
    <location>
        <position position="18"/>
    </location>
    <ligand>
        <name>Mg(2+)</name>
        <dbReference type="ChEBI" id="CHEBI:18420"/>
    </ligand>
</feature>
<feature type="binding site" evidence="1">
    <location>
        <position position="44"/>
    </location>
    <ligand>
        <name>K(+)</name>
        <dbReference type="ChEBI" id="CHEBI:29103"/>
    </ligand>
</feature>
<feature type="binding site" description="in other chain" evidence="1">
    <location>
        <position position="57"/>
    </location>
    <ligand>
        <name>L-methionine</name>
        <dbReference type="ChEBI" id="CHEBI:57844"/>
        <note>ligand shared between two neighboring subunits</note>
    </ligand>
</feature>
<feature type="binding site" description="in other chain" evidence="1">
    <location>
        <position position="100"/>
    </location>
    <ligand>
        <name>L-methionine</name>
        <dbReference type="ChEBI" id="CHEBI:57844"/>
        <note>ligand shared between two neighboring subunits</note>
    </ligand>
</feature>
<feature type="binding site" description="in other chain" evidence="1">
    <location>
        <begin position="175"/>
        <end position="177"/>
    </location>
    <ligand>
        <name>ATP</name>
        <dbReference type="ChEBI" id="CHEBI:30616"/>
        <note>ligand shared between two neighboring subunits</note>
    </ligand>
</feature>
<feature type="binding site" description="in other chain" evidence="1">
    <location>
        <begin position="251"/>
        <end position="252"/>
    </location>
    <ligand>
        <name>ATP</name>
        <dbReference type="ChEBI" id="CHEBI:30616"/>
        <note>ligand shared between two neighboring subunits</note>
    </ligand>
</feature>
<feature type="binding site" evidence="1">
    <location>
        <position position="260"/>
    </location>
    <ligand>
        <name>ATP</name>
        <dbReference type="ChEBI" id="CHEBI:30616"/>
        <note>ligand shared between two neighboring subunits</note>
    </ligand>
</feature>
<feature type="binding site" evidence="1">
    <location>
        <position position="260"/>
    </location>
    <ligand>
        <name>L-methionine</name>
        <dbReference type="ChEBI" id="CHEBI:57844"/>
        <note>ligand shared between two neighboring subunits</note>
    </ligand>
</feature>
<feature type="binding site" description="in other chain" evidence="1">
    <location>
        <begin position="266"/>
        <end position="267"/>
    </location>
    <ligand>
        <name>ATP</name>
        <dbReference type="ChEBI" id="CHEBI:30616"/>
        <note>ligand shared between two neighboring subunits</note>
    </ligand>
</feature>
<feature type="binding site" evidence="1">
    <location>
        <position position="283"/>
    </location>
    <ligand>
        <name>ATP</name>
        <dbReference type="ChEBI" id="CHEBI:30616"/>
        <note>ligand shared between two neighboring subunits</note>
    </ligand>
</feature>
<feature type="binding site" evidence="1">
    <location>
        <position position="287"/>
    </location>
    <ligand>
        <name>ATP</name>
        <dbReference type="ChEBI" id="CHEBI:30616"/>
        <note>ligand shared between two neighboring subunits</note>
    </ligand>
</feature>
<feature type="binding site" description="in other chain" evidence="1">
    <location>
        <position position="291"/>
    </location>
    <ligand>
        <name>L-methionine</name>
        <dbReference type="ChEBI" id="CHEBI:57844"/>
        <note>ligand shared between two neighboring subunits</note>
    </ligand>
</feature>
<proteinExistence type="inferred from homology"/>
<sequence length="417" mass="45041">MSRRYLFTSESVTEGHPDKICDQISDAILDAVLAADPSSRVAAEVVTNTGLVLITGELTTQANVNFIQVARQKIKEIGYTNADNGFSANSCSVMVALDEQSPDIAQGVTSAQEQRDKLSDDQLDEIGAGDQGLMFGYACNETPEFMPLPISLAHRLSLKLSQVRKSGELPYLGPDGKTQVTVIYEDGKPVGIDTILISTQHTETIGALTDNTEIQAKIKADLLEKVIKPVFVGATVGLSDSTKFLVNPTGKFVIGGPQGDSGLTGRKIIIDTYGGYSRHGGGAFSGKDPTKVDRSASYACRYVAKNIVAAGLAEKCEVQVSYAIGVARPVSVMIETFGTCTVDEDRLLEVVQKHFELRPAGIIQAFDLRNLPSQRNGRFYQDMAAYGHFGRTDLDLPWERLDKVDILKQELATATVA</sequence>
<organism>
    <name type="scientific">Picosynechococcus sp. (strain ATCC 27264 / PCC 7002 / PR-6)</name>
    <name type="common">Agmenellum quadruplicatum</name>
    <dbReference type="NCBI Taxonomy" id="32049"/>
    <lineage>
        <taxon>Bacteria</taxon>
        <taxon>Bacillati</taxon>
        <taxon>Cyanobacteriota</taxon>
        <taxon>Cyanophyceae</taxon>
        <taxon>Oscillatoriophycideae</taxon>
        <taxon>Chroococcales</taxon>
        <taxon>Geminocystaceae</taxon>
        <taxon>Picosynechococcus</taxon>
    </lineage>
</organism>
<keyword id="KW-0067">ATP-binding</keyword>
<keyword id="KW-0963">Cytoplasm</keyword>
<keyword id="KW-0460">Magnesium</keyword>
<keyword id="KW-0479">Metal-binding</keyword>
<keyword id="KW-0547">Nucleotide-binding</keyword>
<keyword id="KW-0554">One-carbon metabolism</keyword>
<keyword id="KW-0630">Potassium</keyword>
<keyword id="KW-1185">Reference proteome</keyword>
<keyword id="KW-0808">Transferase</keyword>
<evidence type="ECO:0000255" key="1">
    <source>
        <dbReference type="HAMAP-Rule" id="MF_00086"/>
    </source>
</evidence>
<name>METK_PICP2</name>
<protein>
    <recommendedName>
        <fullName evidence="1">S-adenosylmethionine synthase</fullName>
        <shortName evidence="1">AdoMet synthase</shortName>
        <ecNumber evidence="1">2.5.1.6</ecNumber>
    </recommendedName>
    <alternativeName>
        <fullName evidence="1">MAT</fullName>
    </alternativeName>
    <alternativeName>
        <fullName evidence="1">Methionine adenosyltransferase</fullName>
    </alternativeName>
</protein>
<comment type="function">
    <text evidence="1">Catalyzes the formation of S-adenosylmethionine (AdoMet) from methionine and ATP. The overall synthetic reaction is composed of two sequential steps, AdoMet formation and the subsequent tripolyphosphate hydrolysis which occurs prior to release of AdoMet from the enzyme.</text>
</comment>
<comment type="catalytic activity">
    <reaction evidence="1">
        <text>L-methionine + ATP + H2O = S-adenosyl-L-methionine + phosphate + diphosphate</text>
        <dbReference type="Rhea" id="RHEA:21080"/>
        <dbReference type="ChEBI" id="CHEBI:15377"/>
        <dbReference type="ChEBI" id="CHEBI:30616"/>
        <dbReference type="ChEBI" id="CHEBI:33019"/>
        <dbReference type="ChEBI" id="CHEBI:43474"/>
        <dbReference type="ChEBI" id="CHEBI:57844"/>
        <dbReference type="ChEBI" id="CHEBI:59789"/>
        <dbReference type="EC" id="2.5.1.6"/>
    </reaction>
</comment>
<comment type="cofactor">
    <cofactor evidence="1">
        <name>Mg(2+)</name>
        <dbReference type="ChEBI" id="CHEBI:18420"/>
    </cofactor>
    <text evidence="1">Binds 2 divalent ions per subunit.</text>
</comment>
<comment type="cofactor">
    <cofactor evidence="1">
        <name>K(+)</name>
        <dbReference type="ChEBI" id="CHEBI:29103"/>
    </cofactor>
    <text evidence="1">Binds 1 potassium ion per subunit.</text>
</comment>
<comment type="pathway">
    <text evidence="1">Amino-acid biosynthesis; S-adenosyl-L-methionine biosynthesis; S-adenosyl-L-methionine from L-methionine: step 1/1.</text>
</comment>
<comment type="subunit">
    <text evidence="1">Homotetramer; dimer of dimers.</text>
</comment>
<comment type="subcellular location">
    <subcellularLocation>
        <location evidence="1">Cytoplasm</location>
    </subcellularLocation>
</comment>
<comment type="similarity">
    <text evidence="1">Belongs to the AdoMet synthase family.</text>
</comment>
<dbReference type="EC" id="2.5.1.6" evidence="1"/>
<dbReference type="EMBL" id="CP000951">
    <property type="protein sequence ID" value="ACA99703.1"/>
    <property type="molecule type" value="Genomic_DNA"/>
</dbReference>
<dbReference type="RefSeq" id="WP_012307326.1">
    <property type="nucleotide sequence ID" value="NZ_JAHHPU010000002.1"/>
</dbReference>
<dbReference type="SMR" id="B1XPB0"/>
<dbReference type="STRING" id="32049.SYNPCC7002_A1714"/>
<dbReference type="KEGG" id="syp:SYNPCC7002_A1714"/>
<dbReference type="eggNOG" id="COG0192">
    <property type="taxonomic scope" value="Bacteria"/>
</dbReference>
<dbReference type="HOGENOM" id="CLU_041802_1_1_3"/>
<dbReference type="UniPathway" id="UPA00315">
    <property type="reaction ID" value="UER00080"/>
</dbReference>
<dbReference type="Proteomes" id="UP000001688">
    <property type="component" value="Chromosome"/>
</dbReference>
<dbReference type="GO" id="GO:0005737">
    <property type="term" value="C:cytoplasm"/>
    <property type="evidence" value="ECO:0007669"/>
    <property type="project" value="UniProtKB-SubCell"/>
</dbReference>
<dbReference type="GO" id="GO:0005524">
    <property type="term" value="F:ATP binding"/>
    <property type="evidence" value="ECO:0007669"/>
    <property type="project" value="UniProtKB-UniRule"/>
</dbReference>
<dbReference type="GO" id="GO:0000287">
    <property type="term" value="F:magnesium ion binding"/>
    <property type="evidence" value="ECO:0007669"/>
    <property type="project" value="UniProtKB-UniRule"/>
</dbReference>
<dbReference type="GO" id="GO:0004478">
    <property type="term" value="F:methionine adenosyltransferase activity"/>
    <property type="evidence" value="ECO:0007669"/>
    <property type="project" value="UniProtKB-UniRule"/>
</dbReference>
<dbReference type="GO" id="GO:0006730">
    <property type="term" value="P:one-carbon metabolic process"/>
    <property type="evidence" value="ECO:0007669"/>
    <property type="project" value="UniProtKB-KW"/>
</dbReference>
<dbReference type="GO" id="GO:0006556">
    <property type="term" value="P:S-adenosylmethionine biosynthetic process"/>
    <property type="evidence" value="ECO:0007669"/>
    <property type="project" value="UniProtKB-UniRule"/>
</dbReference>
<dbReference type="CDD" id="cd18079">
    <property type="entry name" value="S-AdoMet_synt"/>
    <property type="match status" value="1"/>
</dbReference>
<dbReference type="FunFam" id="3.30.300.10:FF:000003">
    <property type="entry name" value="S-adenosylmethionine synthase"/>
    <property type="match status" value="1"/>
</dbReference>
<dbReference type="Gene3D" id="3.30.300.10">
    <property type="match status" value="3"/>
</dbReference>
<dbReference type="HAMAP" id="MF_00086">
    <property type="entry name" value="S_AdoMet_synth1"/>
    <property type="match status" value="1"/>
</dbReference>
<dbReference type="InterPro" id="IPR022631">
    <property type="entry name" value="ADOMET_SYNTHASE_CS"/>
</dbReference>
<dbReference type="InterPro" id="IPR022630">
    <property type="entry name" value="S-AdoMet_synt_C"/>
</dbReference>
<dbReference type="InterPro" id="IPR022629">
    <property type="entry name" value="S-AdoMet_synt_central"/>
</dbReference>
<dbReference type="InterPro" id="IPR022628">
    <property type="entry name" value="S-AdoMet_synt_N"/>
</dbReference>
<dbReference type="InterPro" id="IPR002133">
    <property type="entry name" value="S-AdoMet_synthetase"/>
</dbReference>
<dbReference type="InterPro" id="IPR022636">
    <property type="entry name" value="S-AdoMet_synthetase_sfam"/>
</dbReference>
<dbReference type="NCBIfam" id="TIGR01034">
    <property type="entry name" value="metK"/>
    <property type="match status" value="1"/>
</dbReference>
<dbReference type="PANTHER" id="PTHR11964">
    <property type="entry name" value="S-ADENOSYLMETHIONINE SYNTHETASE"/>
    <property type="match status" value="1"/>
</dbReference>
<dbReference type="Pfam" id="PF02773">
    <property type="entry name" value="S-AdoMet_synt_C"/>
    <property type="match status" value="1"/>
</dbReference>
<dbReference type="Pfam" id="PF02772">
    <property type="entry name" value="S-AdoMet_synt_M"/>
    <property type="match status" value="1"/>
</dbReference>
<dbReference type="Pfam" id="PF00438">
    <property type="entry name" value="S-AdoMet_synt_N"/>
    <property type="match status" value="1"/>
</dbReference>
<dbReference type="PIRSF" id="PIRSF000497">
    <property type="entry name" value="MAT"/>
    <property type="match status" value="1"/>
</dbReference>
<dbReference type="SUPFAM" id="SSF55973">
    <property type="entry name" value="S-adenosylmethionine synthetase"/>
    <property type="match status" value="3"/>
</dbReference>
<dbReference type="PROSITE" id="PS00376">
    <property type="entry name" value="ADOMET_SYNTHASE_1"/>
    <property type="match status" value="1"/>
</dbReference>
<dbReference type="PROSITE" id="PS00377">
    <property type="entry name" value="ADOMET_SYNTHASE_2"/>
    <property type="match status" value="1"/>
</dbReference>